<gene>
    <name type="primary">ORF58</name>
</gene>
<proteinExistence type="inferred from homology"/>
<evidence type="ECO:0000250" key="1"/>
<evidence type="ECO:0000255" key="2"/>
<evidence type="ECO:0000305" key="3"/>
<name>ORF58_HHV8P</name>
<feature type="chain" id="PRO_0000423809" description="Protein ORF58">
    <location>
        <begin position="1"/>
        <end position="357"/>
    </location>
</feature>
<feature type="transmembrane region" description="Helical" evidence="2">
    <location>
        <begin position="20"/>
        <end position="40"/>
    </location>
</feature>
<feature type="transmembrane region" description="Helical" evidence="2">
    <location>
        <begin position="44"/>
        <end position="64"/>
    </location>
</feature>
<feature type="transmembrane region" description="Helical" evidence="2">
    <location>
        <begin position="78"/>
        <end position="98"/>
    </location>
</feature>
<feature type="transmembrane region" description="Helical" evidence="2">
    <location>
        <begin position="101"/>
        <end position="121"/>
    </location>
</feature>
<feature type="transmembrane region" description="Helical" evidence="2">
    <location>
        <begin position="132"/>
        <end position="152"/>
    </location>
</feature>
<feature type="transmembrane region" description="Helical" evidence="2">
    <location>
        <begin position="157"/>
        <end position="177"/>
    </location>
</feature>
<feature type="transmembrane region" description="Helical" evidence="2">
    <location>
        <begin position="219"/>
        <end position="239"/>
    </location>
</feature>
<feature type="transmembrane region" description="Helical" evidence="2">
    <location>
        <begin position="242"/>
        <end position="262"/>
    </location>
</feature>
<feature type="transmembrane region" description="Helical" evidence="2">
    <location>
        <begin position="270"/>
        <end position="290"/>
    </location>
</feature>
<feature type="transmembrane region" description="Helical" evidence="2">
    <location>
        <begin position="300"/>
        <end position="320"/>
    </location>
</feature>
<feature type="transmembrane region" description="Helical" evidence="2">
    <location>
        <begin position="333"/>
        <end position="353"/>
    </location>
</feature>
<accession>F5HAD1</accession>
<protein>
    <recommendedName>
        <fullName>Protein ORF58</fullName>
    </recommendedName>
</protein>
<keyword id="KW-1032">Host cell membrane</keyword>
<keyword id="KW-1043">Host membrane</keyword>
<keyword id="KW-0472">Membrane</keyword>
<keyword id="KW-1185">Reference proteome</keyword>
<keyword id="KW-0812">Transmembrane</keyword>
<keyword id="KW-1133">Transmembrane helix</keyword>
<keyword id="KW-0946">Virion</keyword>
<comment type="function">
    <text evidence="1">Participates in rearrangement of cellular actin to increase intercellular contacts and thereby promotes virus cell-to-cell spreadin$g.</text>
</comment>
<comment type="subcellular location">
    <subcellularLocation>
        <location evidence="1">Virion membrane</location>
        <topology evidence="1">Multi-pass membrane protein</topology>
    </subcellularLocation>
    <subcellularLocation>
        <location evidence="1">Host cell membrane</location>
    </subcellularLocation>
</comment>
<comment type="similarity">
    <text evidence="3">Belongs to the herpesviridae BMRF2 family.</text>
</comment>
<dbReference type="EMBL" id="AF148805">
    <property type="protein sequence ID" value="ABD28913.1"/>
    <property type="molecule type" value="Genomic_DNA"/>
</dbReference>
<dbReference type="RefSeq" id="YP_001129415.1">
    <property type="nucleotide sequence ID" value="NC_009333.1"/>
</dbReference>
<dbReference type="BioGRID" id="1776983">
    <property type="interactions" value="5"/>
</dbReference>
<dbReference type="DNASU" id="4961480"/>
<dbReference type="GeneID" id="4961480"/>
<dbReference type="KEGG" id="vg:4961480"/>
<dbReference type="Proteomes" id="UP000000942">
    <property type="component" value="Segment"/>
</dbReference>
<dbReference type="GO" id="GO:0020002">
    <property type="term" value="C:host cell plasma membrane"/>
    <property type="evidence" value="ECO:0007669"/>
    <property type="project" value="UniProtKB-SubCell"/>
</dbReference>
<dbReference type="GO" id="GO:0016020">
    <property type="term" value="C:membrane"/>
    <property type="evidence" value="ECO:0007669"/>
    <property type="project" value="UniProtKB-KW"/>
</dbReference>
<dbReference type="GO" id="GO:0055036">
    <property type="term" value="C:virion membrane"/>
    <property type="evidence" value="ECO:0007669"/>
    <property type="project" value="UniProtKB-SubCell"/>
</dbReference>
<dbReference type="InterPro" id="IPR006727">
    <property type="entry name" value="Herpes_BMRF2"/>
</dbReference>
<dbReference type="Pfam" id="PF04633">
    <property type="entry name" value="Herpes_BMRF2"/>
    <property type="match status" value="1"/>
</dbReference>
<sequence length="357" mass="39661">MCRLDSERALSLFSYLSGTLAATPFLWCFIFKALYSFTLFTTEITAVFFWSLPVTHLALICMCLCPAAQKQLDRRLEWICASAVFAAVVCAAFSGFTFSRVPFIPGLCVLNCLLLLPYPLATATAVYQAPPIVHRYYELGFCGAFMVYYLLLFKKVFVSGVFWLPFIVFLVGGLLAFRHLEQHVYIRAGMQRRRAIFIMPGKYITYSVFQAWAYCRREVVVFVTLLLATLISTASIGLLTPVLIGLDKYMTLFYVGLLSCVGVSVASRRALFVLLPLAAVLLTLVHILGSGPDMLLVRSCLCCLFLVSMLAAMGVEIQLIRRKLHRALNAPQMVLALCTVGNLCISCLLSVINKVVG</sequence>
<organismHost>
    <name type="scientific">Homo sapiens</name>
    <name type="common">Human</name>
    <dbReference type="NCBI Taxonomy" id="9606"/>
</organismHost>
<organism>
    <name type="scientific">Human herpesvirus 8 type P (isolate GK18)</name>
    <name type="common">HHV-8</name>
    <name type="synonym">Kaposi's sarcoma-associated herpesvirus</name>
    <dbReference type="NCBI Taxonomy" id="868565"/>
    <lineage>
        <taxon>Viruses</taxon>
        <taxon>Duplodnaviria</taxon>
        <taxon>Heunggongvirae</taxon>
        <taxon>Peploviricota</taxon>
        <taxon>Herviviricetes</taxon>
        <taxon>Herpesvirales</taxon>
        <taxon>Orthoherpesviridae</taxon>
        <taxon>Gammaherpesvirinae</taxon>
        <taxon>Rhadinovirus</taxon>
        <taxon>Rhadinovirus humangamma8</taxon>
        <taxon>Human herpesvirus 8</taxon>
    </lineage>
</organism>
<reference key="1">
    <citation type="journal article" date="1999" name="J. Virol.">
        <title>Identification of a spliced gene from Kaposi's sarcoma-associated herpesvirus encoding a protein with similarities to latent membrane proteins 1 and 2A of Epstein-Barr virus.</title>
        <authorList>
            <person name="Glenn M."/>
            <person name="Rainbow L."/>
            <person name="Aurade F."/>
            <person name="Davison A."/>
            <person name="Schulz T.F."/>
        </authorList>
    </citation>
    <scope>NUCLEOTIDE SEQUENCE [LARGE SCALE GENOMIC DNA]</scope>
</reference>
<reference key="2">
    <citation type="journal article" date="2006" name="J. Gen. Virol.">
        <title>Kaposi's sarcoma-associated herpesvirus immune modulation: an overview.</title>
        <authorList>
            <person name="Rezaee S.A.R."/>
            <person name="Cunningham C."/>
            <person name="Davison A.J."/>
            <person name="Blackbourn D.J."/>
        </authorList>
    </citation>
    <scope>NUCLEOTIDE SEQUENCE [LARGE SCALE GENOMIC DNA]</scope>
</reference>